<proteinExistence type="evidence at protein level"/>
<feature type="chain" id="PRO_5014159214" description="Germacrene A acid 8-beta-hydroxylase">
    <location>
        <begin position="1"/>
        <end position="495"/>
    </location>
</feature>
<feature type="transmembrane region" description="Helical; Signal-anchor for type II membrane protein" evidence="2">
    <location>
        <begin position="3"/>
        <end position="23"/>
    </location>
</feature>
<feature type="binding site" description="axial binding residue" evidence="1">
    <location>
        <position position="433"/>
    </location>
    <ligand>
        <name>heme</name>
        <dbReference type="ChEBI" id="CHEBI:30413"/>
    </ligand>
    <ligandPart>
        <name>Fe</name>
        <dbReference type="ChEBI" id="CHEBI:18248"/>
    </ligandPart>
</feature>
<feature type="glycosylation site" description="N-linked (GlcNAc...) asparagine" evidence="3">
    <location>
        <position position="103"/>
    </location>
</feature>
<organism>
    <name type="scientific">Inula hupehensis</name>
    <name type="common">Inula helianthus-aquatilis subsp. hupehensis</name>
    <dbReference type="NCBI Taxonomy" id="1805964"/>
    <lineage>
        <taxon>Eukaryota</taxon>
        <taxon>Viridiplantae</taxon>
        <taxon>Streptophyta</taxon>
        <taxon>Embryophyta</taxon>
        <taxon>Tracheophyta</taxon>
        <taxon>Spermatophyta</taxon>
        <taxon>Magnoliopsida</taxon>
        <taxon>eudicotyledons</taxon>
        <taxon>Gunneridae</taxon>
        <taxon>Pentapetalae</taxon>
        <taxon>asterids</taxon>
        <taxon>campanulids</taxon>
        <taxon>Asterales</taxon>
        <taxon>Asteraceae</taxon>
        <taxon>Asteroideae</taxon>
        <taxon>Inuleae</taxon>
        <taxon>Inulinae</taxon>
        <taxon>Inula</taxon>
    </lineage>
</organism>
<evidence type="ECO:0000250" key="1">
    <source>
        <dbReference type="UniProtKB" id="P04798"/>
    </source>
</evidence>
<evidence type="ECO:0000255" key="2"/>
<evidence type="ECO:0000255" key="3">
    <source>
        <dbReference type="PROSITE-ProRule" id="PRU00498"/>
    </source>
</evidence>
<evidence type="ECO:0000269" key="4">
    <source>
    </source>
</evidence>
<evidence type="ECO:0000303" key="5">
    <source>
    </source>
</evidence>
<evidence type="ECO:0000305" key="6"/>
<keyword id="KW-0325">Glycoprotein</keyword>
<keyword id="KW-0349">Heme</keyword>
<keyword id="KW-0408">Iron</keyword>
<keyword id="KW-0472">Membrane</keyword>
<keyword id="KW-0479">Metal-binding</keyword>
<keyword id="KW-0503">Monooxygenase</keyword>
<keyword id="KW-0560">Oxidoreductase</keyword>
<keyword id="KW-0735">Signal-anchor</keyword>
<keyword id="KW-0812">Transmembrane</keyword>
<keyword id="KW-1133">Transmembrane helix</keyword>
<name>C7BL6_INUHU</name>
<protein>
    <recommendedName>
        <fullName evidence="5">Germacrene A acid 8-beta-hydroxylase</fullName>
        <shortName evidence="5">Ih8H</shortName>
        <shortName evidence="5">IhG8H</shortName>
        <ecNumber evidence="4">1.14.14.168</ecNumber>
    </recommendedName>
    <alternativeName>
        <fullName evidence="5">Cytochrome P450 71BL6</fullName>
    </alternativeName>
    <alternativeName>
        <fullName evidence="5">Germacrene A acid 8-alpha-hydroxylase</fullName>
        <ecNumber evidence="4">1.14.14.170</ecNumber>
    </alternativeName>
</protein>
<sequence length="495" mass="55963">MEPFTTFSLVASSLILLICWALVKANKPAKNLPPGPPKLPIIGNMHQLESQSPHRVLRKLSRKYGPIMHLQLGQVPTVVISTPRLVEEVVKHHDINFADRPTNTTSQIFYYNNQNVAWSSYGNYWRQIKKIVTLELLSVKKVRSFSSIRAEELTRAVKSVEPSVGSTINFRDLTSQTVNNMVSRATLGDVCKERHILLDTMNDILKTFNSFNVVNFFPSLQFLNVITGKKAKWLKIHKQLDHILENILEEHKSKPKGNQDDEDLIDVLLRVKDAGGQELPITNDNVKAITLEMLTAGTSSSSMTIEWAFCELMRHPEVMKKVQSDVRSAVKGNKVTEDDIQNMHYLKLVVKETLRLHGVPILVPRQNREDCNVLGYHIPAKTKILINAWACGTDPDTWEDPESFIPERFEKSSVSYFGTDFQLIPFGTGRRICPGVNFGIGTVEAVLSNFLYHFDWKLPDGVKPQDIDMTEVTGISTLPKYPLHIVPVSTVSQQK</sequence>
<reference key="1">
    <citation type="journal article" date="2018" name="Plant J.">
        <title>Discovery of a non-stereoselective cytochrome P450 catalyzing either 8alpha- or 8beta-hydroxylation of germacrene A acid from the Chinese medicinal plant, Inula hupehensis.</title>
        <authorList>
            <person name="Gou J."/>
            <person name="Hao F."/>
            <person name="Huang C."/>
            <person name="Kwon M."/>
            <person name="Chen F."/>
            <person name="Li C."/>
            <person name="Liu C."/>
            <person name="Ro D.K."/>
            <person name="Tang H."/>
            <person name="Zhang Y."/>
        </authorList>
    </citation>
    <scope>NUCLEOTIDE SEQUENCE [MRNA]</scope>
    <scope>FUNCTION</scope>
    <scope>CATALYTIC ACTIVITY</scope>
    <scope>PATHWAY</scope>
    <scope>TISSUE SPECIFICITY</scope>
    <scope>INDUCTION BY JASMONIC ACID</scope>
</reference>
<accession>A0A2H4DGV8</accession>
<comment type="function">
    <text evidence="4">Involved in the biosynthesis of germacrene-derived sesquiterpene lactones (PubMed:29086444). Hydroxylates germacrene A acid to 8-beta-hydroxy-germacrene A and 8-alpha-hydroxy-germacrene A acids (PubMed:29086444). Unlike 8-alpha-hydroxy-germacrene A acid with is spontaneously converted into inunolide (12, 8-alpha), 8-beta-hydroxy-germacrene A cannot undergo spontaneous lactonization (PubMed:29086444).</text>
</comment>
<comment type="catalytic activity">
    <reaction evidence="4">
        <text>germacra-1(10),4,11(13)-trien-12-oate + reduced [NADPH--hemoprotein reductase] + O2 = 8beta-hydroxygermacra-1(10),4,11(13)-trien-12-oate + oxidized [NADPH--hemoprotein reductase] + H2O + H(+)</text>
        <dbReference type="Rhea" id="RHEA:57964"/>
        <dbReference type="Rhea" id="RHEA-COMP:11964"/>
        <dbReference type="Rhea" id="RHEA-COMP:11965"/>
        <dbReference type="ChEBI" id="CHEBI:15377"/>
        <dbReference type="ChEBI" id="CHEBI:15378"/>
        <dbReference type="ChEBI" id="CHEBI:15379"/>
        <dbReference type="ChEBI" id="CHEBI:57618"/>
        <dbReference type="ChEBI" id="CHEBI:58210"/>
        <dbReference type="ChEBI" id="CHEBI:61301"/>
        <dbReference type="ChEBI" id="CHEBI:142464"/>
        <dbReference type="EC" id="1.14.14.168"/>
    </reaction>
    <physiologicalReaction direction="left-to-right" evidence="4">
        <dbReference type="Rhea" id="RHEA:57965"/>
    </physiologicalReaction>
</comment>
<comment type="catalytic activity">
    <reaction evidence="4">
        <text>germacra-1(10),4,11(13)-trien-12-oate + reduced [NADPH--hemoprotein reductase] + O2 = 8-epi-inunolide + oxidized [NADPH--hemoprotein reductase] + 2 H2O</text>
        <dbReference type="Rhea" id="RHEA:57968"/>
        <dbReference type="Rhea" id="RHEA-COMP:11964"/>
        <dbReference type="Rhea" id="RHEA-COMP:11965"/>
        <dbReference type="ChEBI" id="CHEBI:15377"/>
        <dbReference type="ChEBI" id="CHEBI:15379"/>
        <dbReference type="ChEBI" id="CHEBI:57618"/>
        <dbReference type="ChEBI" id="CHEBI:58210"/>
        <dbReference type="ChEBI" id="CHEBI:61301"/>
        <dbReference type="ChEBI" id="CHEBI:142470"/>
        <dbReference type="EC" id="1.14.14.170"/>
    </reaction>
    <physiologicalReaction direction="left-to-right" evidence="4">
        <dbReference type="Rhea" id="RHEA:57969"/>
    </physiologicalReaction>
</comment>
<comment type="catalytic activity">
    <reaction evidence="4">
        <text>germacra-1(10),4,11(13)-trien-12-oate + reduced [NADPH--hemoprotein reductase] + O2 = 8alpha-hydroxygermacra-1(10),4,11(13)-trien-12-oate + oxidized [NADPH--hemoprotein reductase] + H2O + H(+)</text>
        <dbReference type="Rhea" id="RHEA:58032"/>
        <dbReference type="Rhea" id="RHEA-COMP:11964"/>
        <dbReference type="Rhea" id="RHEA-COMP:11965"/>
        <dbReference type="ChEBI" id="CHEBI:15377"/>
        <dbReference type="ChEBI" id="CHEBI:15378"/>
        <dbReference type="ChEBI" id="CHEBI:15379"/>
        <dbReference type="ChEBI" id="CHEBI:57618"/>
        <dbReference type="ChEBI" id="CHEBI:58210"/>
        <dbReference type="ChEBI" id="CHEBI:61301"/>
        <dbReference type="ChEBI" id="CHEBI:142490"/>
    </reaction>
    <physiologicalReaction direction="left-to-right" evidence="4">
        <dbReference type="Rhea" id="RHEA:58033"/>
    </physiologicalReaction>
</comment>
<comment type="cofactor">
    <cofactor evidence="1">
        <name>heme</name>
        <dbReference type="ChEBI" id="CHEBI:30413"/>
    </cofactor>
</comment>
<comment type="pathway">
    <text evidence="4">Secondary metabolite biosynthesis; terpenoid biosynthesis.</text>
</comment>
<comment type="subcellular location">
    <subcellularLocation>
        <location evidence="2">Membrane</location>
        <topology evidence="2">Single-pass type II membrane protein</topology>
    </subcellularLocation>
</comment>
<comment type="tissue specificity">
    <text evidence="4">Mostly expressed in leaves and flowers, and, to a lower extent, in roots and stems.</text>
</comment>
<comment type="induction">
    <text evidence="4">Induced by short jasmonic acid (MeJA) exposure (48 hours), but repressed after a long exposure (120 hours).</text>
</comment>
<comment type="similarity">
    <text evidence="6">Belongs to the cytochrome P450 family.</text>
</comment>
<dbReference type="EC" id="1.14.14.168" evidence="4"/>
<dbReference type="EC" id="1.14.14.170" evidence="4"/>
<dbReference type="EMBL" id="KR029572">
    <property type="protein sequence ID" value="AML23863.1"/>
    <property type="molecule type" value="mRNA"/>
</dbReference>
<dbReference type="SMR" id="A0A2H4DGV8"/>
<dbReference type="GlyCosmos" id="A0A2H4DGV8">
    <property type="glycosylation" value="1 site, No reported glycans"/>
</dbReference>
<dbReference type="KEGG" id="ag:AML23863"/>
<dbReference type="UniPathway" id="UPA00213"/>
<dbReference type="GO" id="GO:0016020">
    <property type="term" value="C:membrane"/>
    <property type="evidence" value="ECO:0007669"/>
    <property type="project" value="UniProtKB-SubCell"/>
</dbReference>
<dbReference type="GO" id="GO:0102614">
    <property type="term" value="F:germacrene A acid 8beta-hydroxylase activity"/>
    <property type="evidence" value="ECO:0000314"/>
    <property type="project" value="UniProtKB"/>
</dbReference>
<dbReference type="GO" id="GO:0020037">
    <property type="term" value="F:heme binding"/>
    <property type="evidence" value="ECO:0007669"/>
    <property type="project" value="InterPro"/>
</dbReference>
<dbReference type="GO" id="GO:0005506">
    <property type="term" value="F:iron ion binding"/>
    <property type="evidence" value="ECO:0007669"/>
    <property type="project" value="InterPro"/>
</dbReference>
<dbReference type="GO" id="GO:0009753">
    <property type="term" value="P:response to jasmonic acid"/>
    <property type="evidence" value="ECO:0000270"/>
    <property type="project" value="UniProtKB"/>
</dbReference>
<dbReference type="GO" id="GO:0051762">
    <property type="term" value="P:sesquiterpene biosynthetic process"/>
    <property type="evidence" value="ECO:0000314"/>
    <property type="project" value="UniProtKB"/>
</dbReference>
<dbReference type="GO" id="GO:0016114">
    <property type="term" value="P:terpenoid biosynthetic process"/>
    <property type="evidence" value="ECO:0007669"/>
    <property type="project" value="UniProtKB-UniPathway"/>
</dbReference>
<dbReference type="CDD" id="cd11072">
    <property type="entry name" value="CYP71-like"/>
    <property type="match status" value="1"/>
</dbReference>
<dbReference type="FunFam" id="1.10.630.10:FF:000043">
    <property type="entry name" value="Cytochrome P450 99A2"/>
    <property type="match status" value="1"/>
</dbReference>
<dbReference type="Gene3D" id="1.10.630.10">
    <property type="entry name" value="Cytochrome P450"/>
    <property type="match status" value="1"/>
</dbReference>
<dbReference type="InterPro" id="IPR001128">
    <property type="entry name" value="Cyt_P450"/>
</dbReference>
<dbReference type="InterPro" id="IPR017972">
    <property type="entry name" value="Cyt_P450_CS"/>
</dbReference>
<dbReference type="InterPro" id="IPR002401">
    <property type="entry name" value="Cyt_P450_E_grp-I"/>
</dbReference>
<dbReference type="InterPro" id="IPR036396">
    <property type="entry name" value="Cyt_P450_sf"/>
</dbReference>
<dbReference type="PANTHER" id="PTHR47955:SF13">
    <property type="entry name" value="CYTOCHROME P450"/>
    <property type="match status" value="1"/>
</dbReference>
<dbReference type="PANTHER" id="PTHR47955">
    <property type="entry name" value="CYTOCHROME P450 FAMILY 71 PROTEIN"/>
    <property type="match status" value="1"/>
</dbReference>
<dbReference type="Pfam" id="PF00067">
    <property type="entry name" value="p450"/>
    <property type="match status" value="1"/>
</dbReference>
<dbReference type="PRINTS" id="PR00463">
    <property type="entry name" value="EP450I"/>
</dbReference>
<dbReference type="PRINTS" id="PR00385">
    <property type="entry name" value="P450"/>
</dbReference>
<dbReference type="SUPFAM" id="SSF48264">
    <property type="entry name" value="Cytochrome P450"/>
    <property type="match status" value="1"/>
</dbReference>
<dbReference type="PROSITE" id="PS00086">
    <property type="entry name" value="CYTOCHROME_P450"/>
    <property type="match status" value="1"/>
</dbReference>
<gene>
    <name evidence="5" type="primary">CYP71BL6</name>
    <name evidence="5" type="synonym">G8H</name>
</gene>